<organism>
    <name type="scientific">Rickettsia bellii (strain RML369-C)</name>
    <dbReference type="NCBI Taxonomy" id="336407"/>
    <lineage>
        <taxon>Bacteria</taxon>
        <taxon>Pseudomonadati</taxon>
        <taxon>Pseudomonadota</taxon>
        <taxon>Alphaproteobacteria</taxon>
        <taxon>Rickettsiales</taxon>
        <taxon>Rickettsiaceae</taxon>
        <taxon>Rickettsieae</taxon>
        <taxon>Rickettsia</taxon>
        <taxon>belli group</taxon>
    </lineage>
</organism>
<name>Y801_RICBR</name>
<accession>Q1RID2</accession>
<feature type="chain" id="PRO_0000280917" description="Putative ankyrin repeat protein RBE_0801">
    <location>
        <begin position="1"/>
        <end position="775"/>
    </location>
</feature>
<feature type="repeat" description="ANK 1">
    <location>
        <begin position="66"/>
        <end position="95"/>
    </location>
</feature>
<feature type="repeat" description="ANK 2">
    <location>
        <begin position="300"/>
        <end position="329"/>
    </location>
</feature>
<feature type="repeat" description="ANK 3">
    <location>
        <begin position="331"/>
        <end position="356"/>
    </location>
</feature>
<feature type="repeat" description="ANK 4">
    <location>
        <begin position="357"/>
        <end position="385"/>
    </location>
</feature>
<feature type="repeat" description="ANK 5">
    <location>
        <begin position="447"/>
        <end position="476"/>
    </location>
</feature>
<feature type="repeat" description="ANK 6">
    <location>
        <begin position="523"/>
        <end position="552"/>
    </location>
</feature>
<reference key="1">
    <citation type="journal article" date="2006" name="PLoS Genet.">
        <title>Genome sequence of Rickettsia bellii illuminates the role of amoebae in gene exchanges between intracellular pathogens.</title>
        <authorList>
            <person name="Ogata H."/>
            <person name="La Scola B."/>
            <person name="Audic S."/>
            <person name="Renesto P."/>
            <person name="Blanc G."/>
            <person name="Robert C."/>
            <person name="Fournier P.-E."/>
            <person name="Claverie J.-M."/>
            <person name="Raoult D."/>
        </authorList>
    </citation>
    <scope>NUCLEOTIDE SEQUENCE [LARGE SCALE GENOMIC DNA]</scope>
    <source>
        <strain>RML369-C</strain>
    </source>
</reference>
<gene>
    <name type="ordered locus">RBE_0801</name>
</gene>
<dbReference type="EMBL" id="CP000087">
    <property type="protein sequence ID" value="ABE04882.1"/>
    <property type="molecule type" value="Genomic_DNA"/>
</dbReference>
<dbReference type="SMR" id="Q1RID2"/>
<dbReference type="KEGG" id="rbe:RBE_0801"/>
<dbReference type="HOGENOM" id="CLU_364418_0_0_5"/>
<dbReference type="OrthoDB" id="7161113at2"/>
<dbReference type="Proteomes" id="UP000001951">
    <property type="component" value="Chromosome"/>
</dbReference>
<dbReference type="Gene3D" id="1.25.40.20">
    <property type="entry name" value="Ankyrin repeat-containing domain"/>
    <property type="match status" value="1"/>
</dbReference>
<dbReference type="InterPro" id="IPR036770">
    <property type="entry name" value="Ankyrin_rpt-contain_sf"/>
</dbReference>
<dbReference type="SUPFAM" id="SSF48403">
    <property type="entry name" value="Ankyrin repeat"/>
    <property type="match status" value="1"/>
</dbReference>
<proteinExistence type="predicted"/>
<keyword id="KW-0040">ANK repeat</keyword>
<keyword id="KW-0677">Repeat</keyword>
<protein>
    <recommendedName>
        <fullName>Putative ankyrin repeat protein RBE_0801</fullName>
    </recommendedName>
</protein>
<sequence length="775" mass="87661">MINIIIKANMKKIILQGYDVGDFSNQQSIVPIYKGNNIEAYLAQKAPEAREIFIYAHGSQYFSHEHSLPQLSLTLQSSNNELVPSILSKITENTEENKPNIVHILSCHASTAHYNMQNINGNIVLCTYAPANYVSNGYVAELLFNTKNNFDNLNDFIVKKLPLLTAISFGISYKLDENVYPLIFDNSSIKGMDINSFSEFLQKQYIKVQKFYTNLQEKYVDKYPELFPEYNFPEKISYSTEELKQAFNVLLNLDSEKLSIEEIQHLLAIDNSHVGNILADAIKCNRTDAIEVVINTMKEATTVDLHSAVKFNNLAVLNRLLDKTEKVENCILQEAIQEHKIEIAEMLINSNKIKSFTNDYLLVAINANNLPILKILLNKEENIVGYLLYRAAELENINTAETVELLFDKTKETDYFINTRVLLRAVKENCLSLINKVIGRMNEFDDIPDVIFDSVIERGNTQIIKILLEKIASFDFLIKAINSNNLPAVEDILKTIKVENKDIAAIIMSGNTDMFKILANKIGDDKILDIAIKLGDSSVVNNILDEKEKQGILDSNKLDEIFETAVKNSNGNVIEDIMNRMPEVTGKHLTIAMQYYAPERAFIFDKVYNSIKQIEYNLILTAIDSGIPDVIQKLVSKLGDEKKASILYDILRSSDIVKNMVVSNILLNNIAKIPDNYKYALLDLTSKGNSYGIKNFFIFNRLLEKSGPIDEEHLNTYLGLLDPSDMFSIMCMGSLYNMKHLASNHNNITTVEDTIVDNLTVTGEINITPSDVNLL</sequence>